<evidence type="ECO:0000255" key="1">
    <source>
        <dbReference type="HAMAP-Rule" id="MF_03054"/>
    </source>
</evidence>
<gene>
    <name type="ORF">GL21098</name>
</gene>
<protein>
    <recommendedName>
        <fullName evidence="1">Cytoplasmic tRNA 2-thiolation protein 2</fullName>
    </recommendedName>
</protein>
<name>CTU2_DROPE</name>
<dbReference type="EMBL" id="CH479195">
    <property type="protein sequence ID" value="EDW27307.1"/>
    <property type="molecule type" value="Genomic_DNA"/>
</dbReference>
<dbReference type="SMR" id="B4GWY0"/>
<dbReference type="STRING" id="7234.B4GWY0"/>
<dbReference type="EnsemblMetazoa" id="FBtr0186713">
    <property type="protein sequence ID" value="FBpp0185205"/>
    <property type="gene ID" value="FBgn0158693"/>
</dbReference>
<dbReference type="EnsemblMetazoa" id="XM_002023143.2">
    <property type="protein sequence ID" value="XP_002023179.1"/>
    <property type="gene ID" value="LOC6597944"/>
</dbReference>
<dbReference type="GeneID" id="6597944"/>
<dbReference type="KEGG" id="dpe:6597944"/>
<dbReference type="CTD" id="348180"/>
<dbReference type="eggNOG" id="KOG2594">
    <property type="taxonomic scope" value="Eukaryota"/>
</dbReference>
<dbReference type="HOGENOM" id="CLU_024534_2_1_1"/>
<dbReference type="OMA" id="CHACRNI"/>
<dbReference type="OrthoDB" id="25129at2759"/>
<dbReference type="PhylomeDB" id="B4GWY0"/>
<dbReference type="UniPathway" id="UPA00988"/>
<dbReference type="Proteomes" id="UP000008744">
    <property type="component" value="Unassembled WGS sequence"/>
</dbReference>
<dbReference type="GO" id="GO:0005829">
    <property type="term" value="C:cytosol"/>
    <property type="evidence" value="ECO:0000250"/>
    <property type="project" value="UniProtKB"/>
</dbReference>
<dbReference type="GO" id="GO:0016779">
    <property type="term" value="F:nucleotidyltransferase activity"/>
    <property type="evidence" value="ECO:0007669"/>
    <property type="project" value="UniProtKB-UniRule"/>
</dbReference>
<dbReference type="GO" id="GO:0016783">
    <property type="term" value="F:sulfurtransferase activity"/>
    <property type="evidence" value="ECO:0007669"/>
    <property type="project" value="TreeGrafter"/>
</dbReference>
<dbReference type="GO" id="GO:0000049">
    <property type="term" value="F:tRNA binding"/>
    <property type="evidence" value="ECO:0007669"/>
    <property type="project" value="InterPro"/>
</dbReference>
<dbReference type="GO" id="GO:0032447">
    <property type="term" value="P:protein urmylation"/>
    <property type="evidence" value="ECO:0007669"/>
    <property type="project" value="UniProtKB-UniRule"/>
</dbReference>
<dbReference type="GO" id="GO:0034227">
    <property type="term" value="P:tRNA thio-modification"/>
    <property type="evidence" value="ECO:0000250"/>
    <property type="project" value="UniProtKB"/>
</dbReference>
<dbReference type="GO" id="GO:0002143">
    <property type="term" value="P:tRNA wobble position uridine thiolation"/>
    <property type="evidence" value="ECO:0007669"/>
    <property type="project" value="TreeGrafter"/>
</dbReference>
<dbReference type="GO" id="GO:0002098">
    <property type="term" value="P:tRNA wobble uridine modification"/>
    <property type="evidence" value="ECO:0000250"/>
    <property type="project" value="UniProtKB"/>
</dbReference>
<dbReference type="FunFam" id="3.40.50.620:FF:000229">
    <property type="entry name" value="Cytoplasmic tRNA 2-thiolation protein 2"/>
    <property type="match status" value="1"/>
</dbReference>
<dbReference type="Gene3D" id="3.40.50.620">
    <property type="entry name" value="HUPs"/>
    <property type="match status" value="1"/>
</dbReference>
<dbReference type="HAMAP" id="MF_03054">
    <property type="entry name" value="CTU2"/>
    <property type="match status" value="1"/>
</dbReference>
<dbReference type="InterPro" id="IPR019407">
    <property type="entry name" value="CTU2"/>
</dbReference>
<dbReference type="InterPro" id="IPR014729">
    <property type="entry name" value="Rossmann-like_a/b/a_fold"/>
</dbReference>
<dbReference type="PANTHER" id="PTHR20882">
    <property type="entry name" value="CYTOPLASMIC TRNA 2-THIOLATION PROTEIN 2"/>
    <property type="match status" value="1"/>
</dbReference>
<dbReference type="PANTHER" id="PTHR20882:SF14">
    <property type="entry name" value="CYTOPLASMIC TRNA 2-THIOLATION PROTEIN 2"/>
    <property type="match status" value="1"/>
</dbReference>
<dbReference type="Pfam" id="PF10288">
    <property type="entry name" value="CTU2"/>
    <property type="match status" value="1"/>
</dbReference>
<dbReference type="SUPFAM" id="SSF52402">
    <property type="entry name" value="Adenine nucleotide alpha hydrolases-like"/>
    <property type="match status" value="1"/>
</dbReference>
<organism>
    <name type="scientific">Drosophila persimilis</name>
    <name type="common">Fruit fly</name>
    <dbReference type="NCBI Taxonomy" id="7234"/>
    <lineage>
        <taxon>Eukaryota</taxon>
        <taxon>Metazoa</taxon>
        <taxon>Ecdysozoa</taxon>
        <taxon>Arthropoda</taxon>
        <taxon>Hexapoda</taxon>
        <taxon>Insecta</taxon>
        <taxon>Pterygota</taxon>
        <taxon>Neoptera</taxon>
        <taxon>Endopterygota</taxon>
        <taxon>Diptera</taxon>
        <taxon>Brachycera</taxon>
        <taxon>Muscomorpha</taxon>
        <taxon>Ephydroidea</taxon>
        <taxon>Drosophilidae</taxon>
        <taxon>Drosophila</taxon>
        <taxon>Sophophora</taxon>
    </lineage>
</organism>
<proteinExistence type="inferred from homology"/>
<sequence length="405" mass="43911">MCSIGEDDVGDEGATHAMVAESLPTGIVISPGDCNKCGVVSSELYKLNFRVAECRDCFLNHARHKFRASLGAAKVLPRNAEVLLAVDGSAESLVLLDMLHFAQTQNTFRRLHCNARVVYIDDQSVHGGESMNLQALQALGTRYEPLEFYVVELGASACSLQRLGQYSTSLKEPNGLNTKLEKLRSLTARQDYHQQQRKNLLASVAQKLSCSHVFEPSVSGDLATQLLTSIALGRGGSAALDVALLDDRLAAGVKLLRPLRDLNEQEVRFYVHACQLKPLRESGSSYGQERGQTASLQNLTAAFVGNLQQNYPATVSTVFRTGDKIAANAHMEQASCAQCQSPLDAKLSDTLLAIEYSRAVSEAGVGLSKDGDASESLAKQRLEFKDGLCHACRCIQLELGYDTLS</sequence>
<feature type="chain" id="PRO_0000369274" description="Cytoplasmic tRNA 2-thiolation protein 2">
    <location>
        <begin position="1"/>
        <end position="405"/>
    </location>
</feature>
<comment type="function">
    <text evidence="1">Plays a central role in 2-thiolation of mcm(5)S(2)U at tRNA wobble positions of tRNA(Lys), tRNA(Glu) and tRNA(Gln). May act by forming a heterodimer with NCS6/CTU1 that ligates sulfur from thiocarboxylated URM1 onto the uridine of tRNAs at wobble position.</text>
</comment>
<comment type="pathway">
    <text evidence="1">tRNA modification; 5-methoxycarbonylmethyl-2-thiouridine-tRNA biosynthesis.</text>
</comment>
<comment type="subcellular location">
    <subcellularLocation>
        <location evidence="1">Cytoplasm</location>
    </subcellularLocation>
</comment>
<comment type="similarity">
    <text evidence="1">Belongs to the CTU2/NCS2 family.</text>
</comment>
<keyword id="KW-0963">Cytoplasm</keyword>
<keyword id="KW-1185">Reference proteome</keyword>
<keyword id="KW-0819">tRNA processing</keyword>
<reference key="1">
    <citation type="journal article" date="2007" name="Nature">
        <title>Evolution of genes and genomes on the Drosophila phylogeny.</title>
        <authorList>
            <consortium name="Drosophila 12 genomes consortium"/>
        </authorList>
    </citation>
    <scope>NUCLEOTIDE SEQUENCE [LARGE SCALE GENOMIC DNA]</scope>
    <source>
        <strain>MSH-3 / Tucson 14011-0111.49</strain>
    </source>
</reference>
<accession>B4GWY0</accession>